<reference key="1">
    <citation type="journal article" date="2013" name="Stand. Genomic Sci.">
        <title>Complete genome sequence of Arthrobacter sp. strain FB24.</title>
        <authorList>
            <person name="Nakatsu C.H."/>
            <person name="Barabote R."/>
            <person name="Thompson S."/>
            <person name="Bruce D."/>
            <person name="Detter C."/>
            <person name="Brettin T."/>
            <person name="Han C."/>
            <person name="Beasley F."/>
            <person name="Chen W."/>
            <person name="Konopka A."/>
            <person name="Xie G."/>
        </authorList>
    </citation>
    <scope>NUCLEOTIDE SEQUENCE [LARGE SCALE GENOMIC DNA]</scope>
    <source>
        <strain>FB24</strain>
    </source>
</reference>
<accession>A0JV22</accession>
<organism>
    <name type="scientific">Arthrobacter sp. (strain FB24)</name>
    <dbReference type="NCBI Taxonomy" id="290399"/>
    <lineage>
        <taxon>Bacteria</taxon>
        <taxon>Bacillati</taxon>
        <taxon>Actinomycetota</taxon>
        <taxon>Actinomycetes</taxon>
        <taxon>Micrococcales</taxon>
        <taxon>Micrococcaceae</taxon>
        <taxon>Arthrobacter</taxon>
    </lineage>
</organism>
<name>ARGB_ARTS2</name>
<dbReference type="EC" id="2.7.2.8" evidence="1"/>
<dbReference type="EMBL" id="CP000454">
    <property type="protein sequence ID" value="ABK02892.1"/>
    <property type="molecule type" value="Genomic_DNA"/>
</dbReference>
<dbReference type="RefSeq" id="WP_011691358.1">
    <property type="nucleotide sequence ID" value="NC_008541.1"/>
</dbReference>
<dbReference type="SMR" id="A0JV22"/>
<dbReference type="STRING" id="290399.Arth_1498"/>
<dbReference type="KEGG" id="art:Arth_1498"/>
<dbReference type="eggNOG" id="COG0548">
    <property type="taxonomic scope" value="Bacteria"/>
</dbReference>
<dbReference type="HOGENOM" id="CLU_053680_0_0_11"/>
<dbReference type="OrthoDB" id="9803155at2"/>
<dbReference type="UniPathway" id="UPA00068">
    <property type="reaction ID" value="UER00107"/>
</dbReference>
<dbReference type="Proteomes" id="UP000000754">
    <property type="component" value="Chromosome"/>
</dbReference>
<dbReference type="GO" id="GO:0005737">
    <property type="term" value="C:cytoplasm"/>
    <property type="evidence" value="ECO:0007669"/>
    <property type="project" value="UniProtKB-SubCell"/>
</dbReference>
<dbReference type="GO" id="GO:0003991">
    <property type="term" value="F:acetylglutamate kinase activity"/>
    <property type="evidence" value="ECO:0007669"/>
    <property type="project" value="UniProtKB-UniRule"/>
</dbReference>
<dbReference type="GO" id="GO:0005524">
    <property type="term" value="F:ATP binding"/>
    <property type="evidence" value="ECO:0007669"/>
    <property type="project" value="UniProtKB-UniRule"/>
</dbReference>
<dbReference type="GO" id="GO:0042450">
    <property type="term" value="P:arginine biosynthetic process via ornithine"/>
    <property type="evidence" value="ECO:0007669"/>
    <property type="project" value="UniProtKB-UniRule"/>
</dbReference>
<dbReference type="GO" id="GO:0006526">
    <property type="term" value="P:L-arginine biosynthetic process"/>
    <property type="evidence" value="ECO:0007669"/>
    <property type="project" value="UniProtKB-UniPathway"/>
</dbReference>
<dbReference type="CDD" id="cd04250">
    <property type="entry name" value="AAK_NAGK-C"/>
    <property type="match status" value="1"/>
</dbReference>
<dbReference type="FunFam" id="3.40.1160.10:FF:000004">
    <property type="entry name" value="Acetylglutamate kinase"/>
    <property type="match status" value="1"/>
</dbReference>
<dbReference type="Gene3D" id="3.40.1160.10">
    <property type="entry name" value="Acetylglutamate kinase-like"/>
    <property type="match status" value="1"/>
</dbReference>
<dbReference type="HAMAP" id="MF_00082">
    <property type="entry name" value="ArgB"/>
    <property type="match status" value="1"/>
</dbReference>
<dbReference type="InterPro" id="IPR036393">
    <property type="entry name" value="AceGlu_kinase-like_sf"/>
</dbReference>
<dbReference type="InterPro" id="IPR004662">
    <property type="entry name" value="AcgluKinase_fam"/>
</dbReference>
<dbReference type="InterPro" id="IPR037528">
    <property type="entry name" value="ArgB"/>
</dbReference>
<dbReference type="InterPro" id="IPR001048">
    <property type="entry name" value="Asp/Glu/Uridylate_kinase"/>
</dbReference>
<dbReference type="InterPro" id="IPR001057">
    <property type="entry name" value="Glu/AcGlu_kinase"/>
</dbReference>
<dbReference type="InterPro" id="IPR041727">
    <property type="entry name" value="NAGK-C"/>
</dbReference>
<dbReference type="NCBIfam" id="TIGR00761">
    <property type="entry name" value="argB"/>
    <property type="match status" value="1"/>
</dbReference>
<dbReference type="PANTHER" id="PTHR23342">
    <property type="entry name" value="N-ACETYLGLUTAMATE SYNTHASE"/>
    <property type="match status" value="1"/>
</dbReference>
<dbReference type="PANTHER" id="PTHR23342:SF0">
    <property type="entry name" value="N-ACETYLGLUTAMATE SYNTHASE, MITOCHONDRIAL"/>
    <property type="match status" value="1"/>
</dbReference>
<dbReference type="Pfam" id="PF00696">
    <property type="entry name" value="AA_kinase"/>
    <property type="match status" value="1"/>
</dbReference>
<dbReference type="PIRSF" id="PIRSF000728">
    <property type="entry name" value="NAGK"/>
    <property type="match status" value="1"/>
</dbReference>
<dbReference type="PRINTS" id="PR00474">
    <property type="entry name" value="GLU5KINASE"/>
</dbReference>
<dbReference type="SUPFAM" id="SSF53633">
    <property type="entry name" value="Carbamate kinase-like"/>
    <property type="match status" value="1"/>
</dbReference>
<gene>
    <name evidence="1" type="primary">argB</name>
    <name type="ordered locus">Arth_1498</name>
</gene>
<evidence type="ECO:0000255" key="1">
    <source>
        <dbReference type="HAMAP-Rule" id="MF_00082"/>
    </source>
</evidence>
<feature type="chain" id="PRO_0000335607" description="Acetylglutamate kinase">
    <location>
        <begin position="1"/>
        <end position="310"/>
    </location>
</feature>
<feature type="binding site" evidence="1">
    <location>
        <begin position="74"/>
        <end position="75"/>
    </location>
    <ligand>
        <name>substrate</name>
    </ligand>
</feature>
<feature type="binding site" evidence="1">
    <location>
        <position position="96"/>
    </location>
    <ligand>
        <name>substrate</name>
    </ligand>
</feature>
<feature type="binding site" evidence="1">
    <location>
        <position position="201"/>
    </location>
    <ligand>
        <name>substrate</name>
    </ligand>
</feature>
<feature type="site" description="Transition state stabilizer" evidence="1">
    <location>
        <position position="39"/>
    </location>
</feature>
<feature type="site" description="Transition state stabilizer" evidence="1">
    <location>
        <position position="262"/>
    </location>
</feature>
<sequence>MNTQTRETTSMSDAQDKAGTLIEALPWIQRFAGTTMVIKYGGNAMVNDELRRAFAEDVVFLHHVGIHPVVVHGGGPQINAMLSRLGIESEFKGGLRVTTPEAMDVVRMVLTGQVGRELVGLINSHGPYAVGMSGEDGGLLRAVRTGTVVDGEEVDLGLVGEVVGVNPEGIVDILAAGRIPVISTVAPEIADDGSTTGQVLNVNADTAAAAVASALGASKLVILTDVEGLYANWPDKSSLISSLTASELREMLPRLESGMIPKMAACLQAVDDGVERAHIVDGRLPHSMLLETFTTAGIGTQVVPDEETNA</sequence>
<keyword id="KW-0028">Amino-acid biosynthesis</keyword>
<keyword id="KW-0055">Arginine biosynthesis</keyword>
<keyword id="KW-0067">ATP-binding</keyword>
<keyword id="KW-0963">Cytoplasm</keyword>
<keyword id="KW-0418">Kinase</keyword>
<keyword id="KW-0547">Nucleotide-binding</keyword>
<keyword id="KW-1185">Reference proteome</keyword>
<keyword id="KW-0808">Transferase</keyword>
<proteinExistence type="inferred from homology"/>
<protein>
    <recommendedName>
        <fullName evidence="1">Acetylglutamate kinase</fullName>
        <ecNumber evidence="1">2.7.2.8</ecNumber>
    </recommendedName>
    <alternativeName>
        <fullName evidence="1">N-acetyl-L-glutamate 5-phosphotransferase</fullName>
    </alternativeName>
    <alternativeName>
        <fullName evidence="1">NAG kinase</fullName>
        <shortName evidence="1">NAGK</shortName>
    </alternativeName>
</protein>
<comment type="function">
    <text evidence="1">Catalyzes the ATP-dependent phosphorylation of N-acetyl-L-glutamate.</text>
</comment>
<comment type="catalytic activity">
    <reaction evidence="1">
        <text>N-acetyl-L-glutamate + ATP = N-acetyl-L-glutamyl 5-phosphate + ADP</text>
        <dbReference type="Rhea" id="RHEA:14629"/>
        <dbReference type="ChEBI" id="CHEBI:30616"/>
        <dbReference type="ChEBI" id="CHEBI:44337"/>
        <dbReference type="ChEBI" id="CHEBI:57936"/>
        <dbReference type="ChEBI" id="CHEBI:456216"/>
        <dbReference type="EC" id="2.7.2.8"/>
    </reaction>
</comment>
<comment type="pathway">
    <text evidence="1">Amino-acid biosynthesis; L-arginine biosynthesis; N(2)-acetyl-L-ornithine from L-glutamate: step 2/4.</text>
</comment>
<comment type="subcellular location">
    <subcellularLocation>
        <location evidence="1">Cytoplasm</location>
    </subcellularLocation>
</comment>
<comment type="similarity">
    <text evidence="1">Belongs to the acetylglutamate kinase family. ArgB subfamily.</text>
</comment>